<keyword id="KW-0378">Hydrolase</keyword>
<comment type="similarity">
    <text evidence="1">Belongs to the UPF0173 family.</text>
</comment>
<reference key="1">
    <citation type="journal article" date="2003" name="Mol. Microbiol.">
        <title>An integrated analysis of the genome of the hyperthermophilic archaeon Pyrococcus abyssi.</title>
        <authorList>
            <person name="Cohen G.N."/>
            <person name="Barbe V."/>
            <person name="Flament D."/>
            <person name="Galperin M."/>
            <person name="Heilig R."/>
            <person name="Lecompte O."/>
            <person name="Poch O."/>
            <person name="Prieur D."/>
            <person name="Querellou J."/>
            <person name="Ripp R."/>
            <person name="Thierry J.-C."/>
            <person name="Van der Oost J."/>
            <person name="Weissenbach J."/>
            <person name="Zivanovic Y."/>
            <person name="Forterre P."/>
        </authorList>
    </citation>
    <scope>NUCLEOTIDE SEQUENCE [LARGE SCALE GENOMIC DNA]</scope>
    <source>
        <strain>GE5 / Orsay</strain>
    </source>
</reference>
<reference key="2">
    <citation type="journal article" date="2012" name="Curr. Microbiol.">
        <title>Re-annotation of two hyperthermophilic archaea Pyrococcus abyssi GE5 and Pyrococcus furiosus DSM 3638.</title>
        <authorList>
            <person name="Gao J."/>
            <person name="Wang J."/>
        </authorList>
    </citation>
    <scope>GENOME REANNOTATION</scope>
    <source>
        <strain>GE5 / Orsay</strain>
    </source>
</reference>
<protein>
    <recommendedName>
        <fullName>UPF0173 protein PYRAB01190</fullName>
    </recommendedName>
</protein>
<proteinExistence type="inferred from homology"/>
<feature type="chain" id="PRO_0000156399" description="UPF0173 protein PYRAB01190">
    <location>
        <begin position="1"/>
        <end position="210"/>
    </location>
</feature>
<dbReference type="EMBL" id="AJ248283">
    <property type="protein sequence ID" value="CAB49043.1"/>
    <property type="molecule type" value="Genomic_DNA"/>
</dbReference>
<dbReference type="EMBL" id="HE613800">
    <property type="protein sequence ID" value="CCE69495.1"/>
    <property type="molecule type" value="Genomic_DNA"/>
</dbReference>
<dbReference type="PIR" id="D75199">
    <property type="entry name" value="D75199"/>
</dbReference>
<dbReference type="RefSeq" id="WP_010867243.1">
    <property type="nucleotide sequence ID" value="NC_000868.1"/>
</dbReference>
<dbReference type="SMR" id="Q9V2F5"/>
<dbReference type="STRING" id="272844.PAB2269"/>
<dbReference type="KEGG" id="pab:PAB2269"/>
<dbReference type="PATRIC" id="fig|272844.11.peg.132"/>
<dbReference type="eggNOG" id="arCOG00497">
    <property type="taxonomic scope" value="Archaea"/>
</dbReference>
<dbReference type="HOGENOM" id="CLU_070010_4_0_2"/>
<dbReference type="OrthoDB" id="28313at2157"/>
<dbReference type="PhylomeDB" id="Q9V2F5"/>
<dbReference type="Proteomes" id="UP000000810">
    <property type="component" value="Chromosome"/>
</dbReference>
<dbReference type="Proteomes" id="UP000009139">
    <property type="component" value="Chromosome"/>
</dbReference>
<dbReference type="GO" id="GO:0016787">
    <property type="term" value="F:hydrolase activity"/>
    <property type="evidence" value="ECO:0007669"/>
    <property type="project" value="UniProtKB-KW"/>
</dbReference>
<dbReference type="Gene3D" id="3.60.15.10">
    <property type="entry name" value="Ribonuclease Z/Hydroxyacylglutathione hydrolase-like"/>
    <property type="match status" value="1"/>
</dbReference>
<dbReference type="InterPro" id="IPR001279">
    <property type="entry name" value="Metallo-B-lactamas"/>
</dbReference>
<dbReference type="InterPro" id="IPR036866">
    <property type="entry name" value="RibonucZ/Hydroxyglut_hydro"/>
</dbReference>
<dbReference type="InterPro" id="IPR050114">
    <property type="entry name" value="UPF0173_UPF0282_UlaG_hydrolase"/>
</dbReference>
<dbReference type="PANTHER" id="PTHR43546:SF8">
    <property type="entry name" value="METALLO-BETA-LACTAMASE DOMAIN-CONTAINING PROTEIN"/>
    <property type="match status" value="1"/>
</dbReference>
<dbReference type="PANTHER" id="PTHR43546">
    <property type="entry name" value="UPF0173 METAL-DEPENDENT HYDROLASE MJ1163-RELATED"/>
    <property type="match status" value="1"/>
</dbReference>
<dbReference type="Pfam" id="PF13483">
    <property type="entry name" value="Lactamase_B_3"/>
    <property type="match status" value="1"/>
</dbReference>
<dbReference type="SMART" id="SM00849">
    <property type="entry name" value="Lactamase_B"/>
    <property type="match status" value="1"/>
</dbReference>
<dbReference type="SUPFAM" id="SSF56281">
    <property type="entry name" value="Metallo-hydrolase/oxidoreductase"/>
    <property type="match status" value="1"/>
</dbReference>
<evidence type="ECO:0000305" key="1"/>
<organism>
    <name type="scientific">Pyrococcus abyssi (strain GE5 / Orsay)</name>
    <dbReference type="NCBI Taxonomy" id="272844"/>
    <lineage>
        <taxon>Archaea</taxon>
        <taxon>Methanobacteriati</taxon>
        <taxon>Methanobacteriota</taxon>
        <taxon>Thermococci</taxon>
        <taxon>Thermococcales</taxon>
        <taxon>Thermococcaceae</taxon>
        <taxon>Pyrococcus</taxon>
    </lineage>
</organism>
<sequence length="210" mass="23738">MKIVWYGHACFLIKTKGVSILIDPYPDVDEDRMEKVDYILITHEHMDHYGKTPLIAKLNDAEVIGPKTVYLMAISDGLTKVREIEAGQEIQLGDVTVKAFYTEHPTSQYPLGYLIIGDKRVAHLGDTYYSPSFKNLRGQVDILLVPIGGRSTASEREAVDIVDIIRPRIAVPMHYGTYGGGSAEGFKRELQRRRVWVLVKDLKPYEGFEV</sequence>
<name>Y119_PYRAB</name>
<accession>Q9V2F5</accession>
<accession>G8ZFV4</accession>
<gene>
    <name type="ordered locus">PYRAB01190</name>
    <name type="ORF">PAB2269</name>
</gene>